<proteinExistence type="inferred from homology"/>
<comment type="similarity">
    <text evidence="1">Belongs to the universal ribosomal protein uL29 family.</text>
</comment>
<feature type="chain" id="PRO_0000130345" description="Large ribosomal subunit protein uL29">
    <location>
        <begin position="1"/>
        <end position="73"/>
    </location>
</feature>
<keyword id="KW-1185">Reference proteome</keyword>
<keyword id="KW-0687">Ribonucleoprotein</keyword>
<keyword id="KW-0689">Ribosomal protein</keyword>
<sequence>MWERERKKFLEDIRKKSLQELEKLLDELKLELTRLRFKKQVQGLENPMEMRKVKRNIARVLTVIREKQLRGEG</sequence>
<accession>P56613</accession>
<name>RL29_AQUAE</name>
<organism>
    <name type="scientific">Aquifex aeolicus (strain VF5)</name>
    <dbReference type="NCBI Taxonomy" id="224324"/>
    <lineage>
        <taxon>Bacteria</taxon>
        <taxon>Pseudomonadati</taxon>
        <taxon>Aquificota</taxon>
        <taxon>Aquificia</taxon>
        <taxon>Aquificales</taxon>
        <taxon>Aquificaceae</taxon>
        <taxon>Aquifex</taxon>
    </lineage>
</organism>
<dbReference type="EMBL" id="AE000657">
    <property type="status" value="NOT_ANNOTATED_CDS"/>
    <property type="molecule type" value="Genomic_DNA"/>
</dbReference>
<dbReference type="RefSeq" id="NP_212997.1">
    <property type="nucleotide sequence ID" value="NC_000918.1"/>
</dbReference>
<dbReference type="RefSeq" id="WP_010879935.1">
    <property type="nucleotide sequence ID" value="NC_000918.1"/>
</dbReference>
<dbReference type="SMR" id="P56613"/>
<dbReference type="KEGG" id="aae:aq_018a"/>
<dbReference type="InParanoid" id="P56613"/>
<dbReference type="OrthoDB" id="9815192at2"/>
<dbReference type="Proteomes" id="UP000000798">
    <property type="component" value="Chromosome"/>
</dbReference>
<dbReference type="GO" id="GO:0022625">
    <property type="term" value="C:cytosolic large ribosomal subunit"/>
    <property type="evidence" value="ECO:0000318"/>
    <property type="project" value="GO_Central"/>
</dbReference>
<dbReference type="GO" id="GO:0003735">
    <property type="term" value="F:structural constituent of ribosome"/>
    <property type="evidence" value="ECO:0007669"/>
    <property type="project" value="InterPro"/>
</dbReference>
<dbReference type="GO" id="GO:0006412">
    <property type="term" value="P:translation"/>
    <property type="evidence" value="ECO:0007669"/>
    <property type="project" value="UniProtKB-UniRule"/>
</dbReference>
<dbReference type="FunFam" id="1.10.287.310:FF:000001">
    <property type="entry name" value="50S ribosomal protein L29"/>
    <property type="match status" value="1"/>
</dbReference>
<dbReference type="Gene3D" id="1.10.287.310">
    <property type="match status" value="1"/>
</dbReference>
<dbReference type="HAMAP" id="MF_00374">
    <property type="entry name" value="Ribosomal_uL29"/>
    <property type="match status" value="1"/>
</dbReference>
<dbReference type="InterPro" id="IPR050063">
    <property type="entry name" value="Ribosomal_protein_uL29"/>
</dbReference>
<dbReference type="InterPro" id="IPR001854">
    <property type="entry name" value="Ribosomal_uL29"/>
</dbReference>
<dbReference type="InterPro" id="IPR018254">
    <property type="entry name" value="Ribosomal_uL29_CS"/>
</dbReference>
<dbReference type="InterPro" id="IPR036049">
    <property type="entry name" value="Ribosomal_uL29_sf"/>
</dbReference>
<dbReference type="NCBIfam" id="TIGR00012">
    <property type="entry name" value="L29"/>
    <property type="match status" value="1"/>
</dbReference>
<dbReference type="PANTHER" id="PTHR10916">
    <property type="entry name" value="60S RIBOSOMAL PROTEIN L35/50S RIBOSOMAL PROTEIN L29"/>
    <property type="match status" value="1"/>
</dbReference>
<dbReference type="PANTHER" id="PTHR10916:SF0">
    <property type="entry name" value="LARGE RIBOSOMAL SUBUNIT PROTEIN UL29C"/>
    <property type="match status" value="1"/>
</dbReference>
<dbReference type="Pfam" id="PF00831">
    <property type="entry name" value="Ribosomal_L29"/>
    <property type="match status" value="1"/>
</dbReference>
<dbReference type="SUPFAM" id="SSF46561">
    <property type="entry name" value="Ribosomal protein L29 (L29p)"/>
    <property type="match status" value="1"/>
</dbReference>
<dbReference type="PROSITE" id="PS00579">
    <property type="entry name" value="RIBOSOMAL_L29"/>
    <property type="match status" value="1"/>
</dbReference>
<reference key="1">
    <citation type="journal article" date="1998" name="Nature">
        <title>The complete genome of the hyperthermophilic bacterium Aquifex aeolicus.</title>
        <authorList>
            <person name="Deckert G."/>
            <person name="Warren P.V."/>
            <person name="Gaasterland T."/>
            <person name="Young W.G."/>
            <person name="Lenox A.L."/>
            <person name="Graham D.E."/>
            <person name="Overbeek R."/>
            <person name="Snead M.A."/>
            <person name="Keller M."/>
            <person name="Aujay M."/>
            <person name="Huber R."/>
            <person name="Feldman R.A."/>
            <person name="Short J.M."/>
            <person name="Olsen G.J."/>
            <person name="Swanson R.V."/>
        </authorList>
    </citation>
    <scope>NUCLEOTIDE SEQUENCE [LARGE SCALE GENOMIC DNA]</scope>
    <source>
        <strain>VF5</strain>
    </source>
</reference>
<gene>
    <name type="primary">rpmC</name>
    <name type="ordered locus">aq_019</name>
</gene>
<evidence type="ECO:0000305" key="1"/>
<protein>
    <recommendedName>
        <fullName evidence="1">Large ribosomal subunit protein uL29</fullName>
    </recommendedName>
    <alternativeName>
        <fullName>50S ribosomal protein L29</fullName>
    </alternativeName>
</protein>